<reference key="1">
    <citation type="journal article" date="2003" name="Genome Res.">
        <title>Comparative genome analysis of Vibrio vulnificus, a marine pathogen.</title>
        <authorList>
            <person name="Chen C.-Y."/>
            <person name="Wu K.-M."/>
            <person name="Chang Y.-C."/>
            <person name="Chang C.-H."/>
            <person name="Tsai H.-C."/>
            <person name="Liao T.-L."/>
            <person name="Liu Y.-M."/>
            <person name="Chen H.-J."/>
            <person name="Shen A.B.-T."/>
            <person name="Li J.-C."/>
            <person name="Su T.-L."/>
            <person name="Shao C.-P."/>
            <person name="Lee C.-T."/>
            <person name="Hor L.-I."/>
            <person name="Tsai S.-F."/>
        </authorList>
    </citation>
    <scope>NUCLEOTIDE SEQUENCE [LARGE SCALE GENOMIC DNA]</scope>
    <source>
        <strain>YJ016</strain>
    </source>
</reference>
<organism>
    <name type="scientific">Vibrio vulnificus (strain YJ016)</name>
    <dbReference type="NCBI Taxonomy" id="196600"/>
    <lineage>
        <taxon>Bacteria</taxon>
        <taxon>Pseudomonadati</taxon>
        <taxon>Pseudomonadota</taxon>
        <taxon>Gammaproteobacteria</taxon>
        <taxon>Vibrionales</taxon>
        <taxon>Vibrionaceae</taxon>
        <taxon>Vibrio</taxon>
    </lineage>
</organism>
<protein>
    <recommendedName>
        <fullName evidence="1">Exodeoxyribonuclease 7 small subunit</fullName>
        <ecNumber evidence="1">3.1.11.6</ecNumber>
    </recommendedName>
    <alternativeName>
        <fullName evidence="1">Exodeoxyribonuclease VII small subunit</fullName>
        <shortName evidence="1">Exonuclease VII small subunit</shortName>
    </alternativeName>
</protein>
<name>EX7S_VIBVY</name>
<sequence>MATKKPENMSFEATIEELDNLVDQLENGDLALDDALKKFERGIALARASQAKLTEAEQRVSILLSDSDDAPLSDFSTLAE</sequence>
<comment type="function">
    <text evidence="1">Bidirectionally degrades single-stranded DNA into large acid-insoluble oligonucleotides, which are then degraded further into small acid-soluble oligonucleotides.</text>
</comment>
<comment type="catalytic activity">
    <reaction evidence="1">
        <text>Exonucleolytic cleavage in either 5'- to 3'- or 3'- to 5'-direction to yield nucleoside 5'-phosphates.</text>
        <dbReference type="EC" id="3.1.11.6"/>
    </reaction>
</comment>
<comment type="subunit">
    <text evidence="1">Heterooligomer composed of large and small subunits.</text>
</comment>
<comment type="subcellular location">
    <subcellularLocation>
        <location evidence="1">Cytoplasm</location>
    </subcellularLocation>
</comment>
<comment type="similarity">
    <text evidence="1">Belongs to the XseB family.</text>
</comment>
<accession>Q7MN47</accession>
<keyword id="KW-0963">Cytoplasm</keyword>
<keyword id="KW-0269">Exonuclease</keyword>
<keyword id="KW-0378">Hydrolase</keyword>
<keyword id="KW-0540">Nuclease</keyword>
<evidence type="ECO:0000255" key="1">
    <source>
        <dbReference type="HAMAP-Rule" id="MF_00337"/>
    </source>
</evidence>
<proteinExistence type="inferred from homology"/>
<gene>
    <name evidence="1" type="primary">xseB</name>
    <name type="ordered locus">VV0870</name>
</gene>
<feature type="chain" id="PRO_0000207032" description="Exodeoxyribonuclease 7 small subunit">
    <location>
        <begin position="1"/>
        <end position="80"/>
    </location>
</feature>
<dbReference type="EC" id="3.1.11.6" evidence="1"/>
<dbReference type="EMBL" id="BA000037">
    <property type="protein sequence ID" value="BAC93634.1"/>
    <property type="molecule type" value="Genomic_DNA"/>
</dbReference>
<dbReference type="RefSeq" id="WP_011078418.1">
    <property type="nucleotide sequence ID" value="NC_005139.1"/>
</dbReference>
<dbReference type="SMR" id="Q7MN47"/>
<dbReference type="STRING" id="672.VV93_v1c08090"/>
<dbReference type="GeneID" id="93894655"/>
<dbReference type="KEGG" id="vvy:VV0870"/>
<dbReference type="eggNOG" id="COG1722">
    <property type="taxonomic scope" value="Bacteria"/>
</dbReference>
<dbReference type="HOGENOM" id="CLU_145918_3_3_6"/>
<dbReference type="Proteomes" id="UP000002675">
    <property type="component" value="Chromosome I"/>
</dbReference>
<dbReference type="GO" id="GO:0005829">
    <property type="term" value="C:cytosol"/>
    <property type="evidence" value="ECO:0007669"/>
    <property type="project" value="TreeGrafter"/>
</dbReference>
<dbReference type="GO" id="GO:0009318">
    <property type="term" value="C:exodeoxyribonuclease VII complex"/>
    <property type="evidence" value="ECO:0007669"/>
    <property type="project" value="InterPro"/>
</dbReference>
<dbReference type="GO" id="GO:0008855">
    <property type="term" value="F:exodeoxyribonuclease VII activity"/>
    <property type="evidence" value="ECO:0007669"/>
    <property type="project" value="UniProtKB-UniRule"/>
</dbReference>
<dbReference type="GO" id="GO:0006308">
    <property type="term" value="P:DNA catabolic process"/>
    <property type="evidence" value="ECO:0007669"/>
    <property type="project" value="UniProtKB-UniRule"/>
</dbReference>
<dbReference type="Gene3D" id="1.10.287.1040">
    <property type="entry name" value="Exonuclease VII, small subunit"/>
    <property type="match status" value="1"/>
</dbReference>
<dbReference type="HAMAP" id="MF_00337">
    <property type="entry name" value="Exonuc_7_S"/>
    <property type="match status" value="1"/>
</dbReference>
<dbReference type="InterPro" id="IPR003761">
    <property type="entry name" value="Exonuc_VII_S"/>
</dbReference>
<dbReference type="InterPro" id="IPR037004">
    <property type="entry name" value="Exonuc_VII_ssu_sf"/>
</dbReference>
<dbReference type="NCBIfam" id="NF002137">
    <property type="entry name" value="PRK00977.1-1"/>
    <property type="match status" value="1"/>
</dbReference>
<dbReference type="NCBIfam" id="NF002140">
    <property type="entry name" value="PRK00977.1-4"/>
    <property type="match status" value="1"/>
</dbReference>
<dbReference type="NCBIfam" id="TIGR01280">
    <property type="entry name" value="xseB"/>
    <property type="match status" value="1"/>
</dbReference>
<dbReference type="PANTHER" id="PTHR34137">
    <property type="entry name" value="EXODEOXYRIBONUCLEASE 7 SMALL SUBUNIT"/>
    <property type="match status" value="1"/>
</dbReference>
<dbReference type="PANTHER" id="PTHR34137:SF1">
    <property type="entry name" value="EXODEOXYRIBONUCLEASE 7 SMALL SUBUNIT"/>
    <property type="match status" value="1"/>
</dbReference>
<dbReference type="Pfam" id="PF02609">
    <property type="entry name" value="Exonuc_VII_S"/>
    <property type="match status" value="1"/>
</dbReference>
<dbReference type="PIRSF" id="PIRSF006488">
    <property type="entry name" value="Exonuc_VII_S"/>
    <property type="match status" value="1"/>
</dbReference>
<dbReference type="SUPFAM" id="SSF116842">
    <property type="entry name" value="XseB-like"/>
    <property type="match status" value="1"/>
</dbReference>